<sequence length="131" mass="14462">MLYPALLCAALLLIAPLGHTEGRTLHPSPDAIQFVEQFLDRYNDLTLDDLENLVSSQPEEPSSAFTSGVKVAEYPKWADIPAQGDSTWLRLLKGTLANQKRAVMDRSRRGWNRGCFGLKLDRIGSMSGLGC</sequence>
<feature type="signal peptide" evidence="3">
    <location>
        <begin position="1"/>
        <end position="22"/>
    </location>
</feature>
<feature type="propeptide" id="PRO_0000001589" evidence="1">
    <location>
        <begin position="23"/>
        <end position="109"/>
    </location>
</feature>
<feature type="peptide" id="PRO_0000001590" description="C-type natriuretic peptide 1">
    <location>
        <begin position="110"/>
        <end position="131"/>
    </location>
</feature>
<feature type="disulfide bond" evidence="2">
    <location>
        <begin position="115"/>
        <end position="131"/>
    </location>
</feature>
<comment type="function">
    <text evidence="2 5">Exhibits natriuretic and vasodepressant activity. Has a cGMP-stimulating activity.</text>
</comment>
<comment type="subcellular location">
    <subcellularLocation>
        <location>Secreted</location>
    </subcellularLocation>
</comment>
<comment type="tissue specificity">
    <text evidence="5">Expressed in brain and to a low extent in atrium.</text>
</comment>
<comment type="similarity">
    <text evidence="4">Belongs to the natriuretic peptide family.</text>
</comment>
<keyword id="KW-0165">Cleavage on pair of basic residues</keyword>
<keyword id="KW-1015">Disulfide bond</keyword>
<keyword id="KW-0372">Hormone</keyword>
<keyword id="KW-0964">Secreted</keyword>
<keyword id="KW-0732">Signal</keyword>
<keyword id="KW-0838">Vasoactive</keyword>
<protein>
    <recommendedName>
        <fullName>C-type natriuretic peptide 1</fullName>
    </recommendedName>
    <alternativeName>
        <fullName>C-type natriuretic peptide I</fullName>
    </alternativeName>
    <alternativeName>
        <fullName>CNP-22 I</fullName>
    </alternativeName>
</protein>
<reference evidence="6 7" key="1">
    <citation type="journal article" date="2003" name="Gen. Comp. Endocrinol.">
        <title>C-type natriuretic peptide of rainbow trout (Oncorhynchus mykiss): primary structure and vasorelaxant activities.</title>
        <authorList>
            <person name="Inoue K."/>
            <person name="Russell M.J."/>
            <person name="Olson K.R."/>
            <person name="Takei Y."/>
        </authorList>
    </citation>
    <scope>NUCLEOTIDE SEQUENCE [MRNA]</scope>
    <scope>FUNCTION</scope>
    <scope>TISSUE SPECIFICITY</scope>
    <scope>SYNTHESIS</scope>
    <source>
        <tissue evidence="5">Brain</tissue>
    </source>
</reference>
<dbReference type="EMBL" id="AB076601">
    <property type="protein sequence ID" value="BAC44842.1"/>
    <property type="molecule type" value="mRNA"/>
</dbReference>
<dbReference type="RefSeq" id="NP_001123455.1">
    <property type="nucleotide sequence ID" value="NM_001129983.1"/>
</dbReference>
<dbReference type="SMR" id="Q8AXR3"/>
<dbReference type="Ensembl" id="ENSOMYT00000068038.2">
    <property type="protein sequence ID" value="ENSOMYP00000062476.1"/>
    <property type="gene ID" value="ENSOMYG00000028902.2"/>
</dbReference>
<dbReference type="GeneID" id="100170203"/>
<dbReference type="CTD" id="563937"/>
<dbReference type="GeneTree" id="ENSGT00390000015492"/>
<dbReference type="OrthoDB" id="9387790at2759"/>
<dbReference type="Proteomes" id="UP000694395">
    <property type="component" value="Chromosome 3"/>
</dbReference>
<dbReference type="GO" id="GO:0005576">
    <property type="term" value="C:extracellular region"/>
    <property type="evidence" value="ECO:0007669"/>
    <property type="project" value="UniProtKB-SubCell"/>
</dbReference>
<dbReference type="GO" id="GO:0005179">
    <property type="term" value="F:hormone activity"/>
    <property type="evidence" value="ECO:0007669"/>
    <property type="project" value="UniProtKB-KW"/>
</dbReference>
<dbReference type="GO" id="GO:0006182">
    <property type="term" value="P:cGMP biosynthetic process"/>
    <property type="evidence" value="ECO:0007669"/>
    <property type="project" value="TreeGrafter"/>
</dbReference>
<dbReference type="GO" id="GO:0007168">
    <property type="term" value="P:receptor guanylyl cyclase signaling pathway"/>
    <property type="evidence" value="ECO:0007669"/>
    <property type="project" value="TreeGrafter"/>
</dbReference>
<dbReference type="GO" id="GO:0042311">
    <property type="term" value="P:vasodilation"/>
    <property type="evidence" value="ECO:0000314"/>
    <property type="project" value="AgBase"/>
</dbReference>
<dbReference type="InterPro" id="IPR002406">
    <property type="entry name" value="C_natriurtcpep"/>
</dbReference>
<dbReference type="InterPro" id="IPR000663">
    <property type="entry name" value="Natr_peptide"/>
</dbReference>
<dbReference type="InterPro" id="IPR030480">
    <property type="entry name" value="Natr_peptide_CS"/>
</dbReference>
<dbReference type="PANTHER" id="PTHR12167">
    <property type="entry name" value="C-TYPE NATRIURETIC PEPTIDE"/>
    <property type="match status" value="1"/>
</dbReference>
<dbReference type="PANTHER" id="PTHR12167:SF4">
    <property type="entry name" value="NATRIURETIC PEPTIDE C-LIKE PROTEIN"/>
    <property type="match status" value="1"/>
</dbReference>
<dbReference type="Pfam" id="PF00212">
    <property type="entry name" value="ANP"/>
    <property type="match status" value="1"/>
</dbReference>
<dbReference type="PRINTS" id="PR00713">
    <property type="entry name" value="CNATPEPTIDE"/>
</dbReference>
<dbReference type="PRINTS" id="PR00710">
    <property type="entry name" value="NATPEPTIDES"/>
</dbReference>
<dbReference type="SMART" id="SM00183">
    <property type="entry name" value="NAT_PEP"/>
    <property type="match status" value="1"/>
</dbReference>
<dbReference type="PROSITE" id="PS00263">
    <property type="entry name" value="NATRIURETIC_PEPTIDE"/>
    <property type="match status" value="1"/>
</dbReference>
<name>ANFC1_ONCMY</name>
<gene>
    <name evidence="7" type="primary">cnp-1</name>
</gene>
<evidence type="ECO:0000250" key="1"/>
<evidence type="ECO:0000250" key="2">
    <source>
        <dbReference type="UniProtKB" id="P18145"/>
    </source>
</evidence>
<evidence type="ECO:0000255" key="3"/>
<evidence type="ECO:0000255" key="4">
    <source>
        <dbReference type="RuleBase" id="RU003686"/>
    </source>
</evidence>
<evidence type="ECO:0000269" key="5">
    <source>
    </source>
</evidence>
<evidence type="ECO:0000305" key="6"/>
<evidence type="ECO:0000312" key="7">
    <source>
        <dbReference type="EMBL" id="BAC44842.1"/>
    </source>
</evidence>
<organism>
    <name type="scientific">Oncorhynchus mykiss</name>
    <name type="common">Rainbow trout</name>
    <name type="synonym">Salmo gairdneri</name>
    <dbReference type="NCBI Taxonomy" id="8022"/>
    <lineage>
        <taxon>Eukaryota</taxon>
        <taxon>Metazoa</taxon>
        <taxon>Chordata</taxon>
        <taxon>Craniata</taxon>
        <taxon>Vertebrata</taxon>
        <taxon>Euteleostomi</taxon>
        <taxon>Actinopterygii</taxon>
        <taxon>Neopterygii</taxon>
        <taxon>Teleostei</taxon>
        <taxon>Protacanthopterygii</taxon>
        <taxon>Salmoniformes</taxon>
        <taxon>Salmonidae</taxon>
        <taxon>Salmoninae</taxon>
        <taxon>Oncorhynchus</taxon>
    </lineage>
</organism>
<accession>Q8AXR3</accession>
<proteinExistence type="evidence at transcript level"/>